<organism>
    <name type="scientific">Actinobacillus succinogenes (strain ATCC 55618 / DSM 22257 / CCUG 43843 / 130Z)</name>
    <dbReference type="NCBI Taxonomy" id="339671"/>
    <lineage>
        <taxon>Bacteria</taxon>
        <taxon>Pseudomonadati</taxon>
        <taxon>Pseudomonadota</taxon>
        <taxon>Gammaproteobacteria</taxon>
        <taxon>Pasteurellales</taxon>
        <taxon>Pasteurellaceae</taxon>
        <taxon>Actinobacillus</taxon>
    </lineage>
</organism>
<keyword id="KW-1185">Reference proteome</keyword>
<reference key="1">
    <citation type="journal article" date="2010" name="BMC Genomics">
        <title>A genomic perspective on the potential of Actinobacillus succinogenes for industrial succinate production.</title>
        <authorList>
            <person name="McKinlay J.B."/>
            <person name="Laivenieks M."/>
            <person name="Schindler B.D."/>
            <person name="McKinlay A.A."/>
            <person name="Siddaramappa S."/>
            <person name="Challacombe J.F."/>
            <person name="Lowry S.R."/>
            <person name="Clum A."/>
            <person name="Lapidus A.L."/>
            <person name="Burkhart K.B."/>
            <person name="Harkins V."/>
            <person name="Vieille C."/>
        </authorList>
    </citation>
    <scope>NUCLEOTIDE SEQUENCE [LARGE SCALE GENOMIC DNA]</scope>
    <source>
        <strain>ATCC 55618 / DSM 22257 / CCUG 43843 / 130Z</strain>
    </source>
</reference>
<comment type="subunit">
    <text evidence="1">Homodimer.</text>
</comment>
<comment type="similarity">
    <text evidence="1">Belongs to the UPF0210 family.</text>
</comment>
<name>Y1169_ACTSZ</name>
<accession>A6VNI7</accession>
<gene>
    <name type="ordered locus">Asuc_1169</name>
</gene>
<sequence length="451" mass="46645">MSIQSNEILETIRMVADQNFDVRTITVGIDLHDCISCDIDELNRNIYRKITTVGKDLVETANILSAKYGVPIVNQRISVTPIAQIAAATKADSYVSVAQTLDRAAKAIGVSFIGGFSALVQKGMSPSDEVLIRSIPEAMKTTDIVCSSINIGSTRAGINMDAVKLAGETIKRTADITPEGFGCAKIVVFCNAVEDNPFMAGAFHGAGEADAVINVGVSGPGVVKEALANSHADTLTEVAEVVKKTAFKITRVGELIGQEAAKMLNIPFGILDLSLAPTPAIGDSVARILETMGLTVCGTHGTTAALALLNDAVKKGGMMASGSVGGLSGAFIPVSEDEGMIAAAESGILTLDKLEAMTAVCSVGLDMIAVPGKTPAHTLSGIIADEAAIGMINGKTTAVRIIPVTGKDVGESVEFGGLLGYAPIMPVKEGSCEIFVNRGGRIPAPVQSMKN</sequence>
<protein>
    <recommendedName>
        <fullName evidence="1">UPF0210 protein Asuc_1169</fullName>
    </recommendedName>
</protein>
<proteinExistence type="inferred from homology"/>
<dbReference type="EMBL" id="CP000746">
    <property type="protein sequence ID" value="ABR74534.1"/>
    <property type="molecule type" value="Genomic_DNA"/>
</dbReference>
<dbReference type="RefSeq" id="WP_012072911.1">
    <property type="nucleotide sequence ID" value="NC_009655.1"/>
</dbReference>
<dbReference type="SMR" id="A6VNI7"/>
<dbReference type="STRING" id="339671.Asuc_1169"/>
<dbReference type="KEGG" id="asu:Asuc_1169"/>
<dbReference type="eggNOG" id="COG2848">
    <property type="taxonomic scope" value="Bacteria"/>
</dbReference>
<dbReference type="HOGENOM" id="CLU_048704_0_0_6"/>
<dbReference type="OrthoDB" id="9763001at2"/>
<dbReference type="Proteomes" id="UP000001114">
    <property type="component" value="Chromosome"/>
</dbReference>
<dbReference type="CDD" id="cd08025">
    <property type="entry name" value="RNR_PFL_like_DUF711"/>
    <property type="match status" value="1"/>
</dbReference>
<dbReference type="Gene3D" id="3.20.70.20">
    <property type="match status" value="1"/>
</dbReference>
<dbReference type="HAMAP" id="MF_01221">
    <property type="entry name" value="UPF0210"/>
    <property type="match status" value="1"/>
</dbReference>
<dbReference type="InterPro" id="IPR007841">
    <property type="entry name" value="UPF0210"/>
</dbReference>
<dbReference type="NCBIfam" id="NF003700">
    <property type="entry name" value="PRK05313.1"/>
    <property type="match status" value="1"/>
</dbReference>
<dbReference type="PANTHER" id="PTHR37560:SF1">
    <property type="entry name" value="UPF0210 PROTEIN MJ1665"/>
    <property type="match status" value="1"/>
</dbReference>
<dbReference type="PANTHER" id="PTHR37560">
    <property type="entry name" value="UPF0210 PROTEIN SPR0218"/>
    <property type="match status" value="1"/>
</dbReference>
<dbReference type="Pfam" id="PF05167">
    <property type="entry name" value="DUF711"/>
    <property type="match status" value="1"/>
</dbReference>
<dbReference type="SUPFAM" id="SSF51998">
    <property type="entry name" value="PFL-like glycyl radical enzymes"/>
    <property type="match status" value="1"/>
</dbReference>
<feature type="chain" id="PRO_1000073147" description="UPF0210 protein Asuc_1169">
    <location>
        <begin position="1"/>
        <end position="451"/>
    </location>
</feature>
<evidence type="ECO:0000255" key="1">
    <source>
        <dbReference type="HAMAP-Rule" id="MF_01221"/>
    </source>
</evidence>